<accession>Q9EZ10</accession>
<gene>
    <name evidence="1" type="primary">dapH</name>
</gene>
<proteinExistence type="inferred from homology"/>
<evidence type="ECO:0000255" key="1">
    <source>
        <dbReference type="HAMAP-Rule" id="MF_01691"/>
    </source>
</evidence>
<reference key="1">
    <citation type="journal article" date="2001" name="Infect. Immun.">
        <title>Identification and analysis of Staphylococcus aureus components expressed by a model system of growth in serum.</title>
        <authorList>
            <person name="Wiltshire M.D."/>
            <person name="Foster S.J."/>
        </authorList>
    </citation>
    <scope>NUCLEOTIDE SEQUENCE [GENOMIC DNA]</scope>
    <source>
        <strain>8325-4</strain>
    </source>
</reference>
<name>DAPH_STAAU</name>
<protein>
    <recommendedName>
        <fullName evidence="1">2,3,4,5-tetrahydropyridine-2,6-dicarboxylate N-acetyltransferase</fullName>
        <ecNumber evidence="1">2.3.1.89</ecNumber>
    </recommendedName>
    <alternativeName>
        <fullName evidence="1">Tetrahydrodipicolinate N-acetyltransferase</fullName>
        <shortName evidence="1">THP acetyltransferase</shortName>
        <shortName evidence="1">Tetrahydropicolinate acetylase</shortName>
    </alternativeName>
</protein>
<dbReference type="EC" id="2.3.1.89" evidence="1"/>
<dbReference type="EMBL" id="AF306669">
    <property type="protein sequence ID" value="AAG42248.1"/>
    <property type="molecule type" value="Genomic_DNA"/>
</dbReference>
<dbReference type="PIR" id="E89916">
    <property type="entry name" value="E89916"/>
</dbReference>
<dbReference type="SMR" id="Q9EZ10"/>
<dbReference type="OMA" id="KHCHIGA"/>
<dbReference type="UniPathway" id="UPA00034">
    <property type="reaction ID" value="UER00022"/>
</dbReference>
<dbReference type="GO" id="GO:0047200">
    <property type="term" value="F:tetrahydrodipicolinate N-acetyltransferase activity"/>
    <property type="evidence" value="ECO:0007669"/>
    <property type="project" value="UniProtKB-EC"/>
</dbReference>
<dbReference type="GO" id="GO:0019877">
    <property type="term" value="P:diaminopimelate biosynthetic process"/>
    <property type="evidence" value="ECO:0007669"/>
    <property type="project" value="UniProtKB-UniRule"/>
</dbReference>
<dbReference type="GO" id="GO:0009089">
    <property type="term" value="P:lysine biosynthetic process via diaminopimelate"/>
    <property type="evidence" value="ECO:0007669"/>
    <property type="project" value="UniProtKB-UniRule"/>
</dbReference>
<dbReference type="CDD" id="cd03350">
    <property type="entry name" value="LbH_THP_succinylT"/>
    <property type="match status" value="1"/>
</dbReference>
<dbReference type="Gene3D" id="2.160.10.10">
    <property type="entry name" value="Hexapeptide repeat proteins"/>
    <property type="match status" value="1"/>
</dbReference>
<dbReference type="Gene3D" id="3.30.70.250">
    <property type="entry name" value="Malonyl-CoA ACP transacylase, ACP-binding"/>
    <property type="match status" value="1"/>
</dbReference>
<dbReference type="HAMAP" id="MF_01691">
    <property type="entry name" value="DapH"/>
    <property type="match status" value="1"/>
</dbReference>
<dbReference type="InterPro" id="IPR019873">
    <property type="entry name" value="DapH"/>
</dbReference>
<dbReference type="InterPro" id="IPR013710">
    <property type="entry name" value="DapH_N"/>
</dbReference>
<dbReference type="InterPro" id="IPR001451">
    <property type="entry name" value="Hexapep"/>
</dbReference>
<dbReference type="InterPro" id="IPR018357">
    <property type="entry name" value="Hexapep_transf_CS"/>
</dbReference>
<dbReference type="InterPro" id="IPR050179">
    <property type="entry name" value="Trans_hexapeptide_repeat"/>
</dbReference>
<dbReference type="InterPro" id="IPR011004">
    <property type="entry name" value="Trimer_LpxA-like_sf"/>
</dbReference>
<dbReference type="NCBIfam" id="TIGR03532">
    <property type="entry name" value="DapD_Ac"/>
    <property type="match status" value="1"/>
</dbReference>
<dbReference type="PANTHER" id="PTHR43300:SF10">
    <property type="entry name" value="2,3,4,5-TETRAHYDROPYRIDINE-2,6-DICARBOXYLATE N-ACETYLTRANSFERASE"/>
    <property type="match status" value="1"/>
</dbReference>
<dbReference type="PANTHER" id="PTHR43300">
    <property type="entry name" value="ACETYLTRANSFERASE"/>
    <property type="match status" value="1"/>
</dbReference>
<dbReference type="Pfam" id="PF08503">
    <property type="entry name" value="DapH_N"/>
    <property type="match status" value="1"/>
</dbReference>
<dbReference type="Pfam" id="PF00132">
    <property type="entry name" value="Hexapep"/>
    <property type="match status" value="1"/>
</dbReference>
<dbReference type="Pfam" id="PF14602">
    <property type="entry name" value="Hexapep_2"/>
    <property type="match status" value="1"/>
</dbReference>
<dbReference type="SUPFAM" id="SSF51161">
    <property type="entry name" value="Trimeric LpxA-like enzymes"/>
    <property type="match status" value="1"/>
</dbReference>
<dbReference type="PROSITE" id="PS00101">
    <property type="entry name" value="HEXAPEP_TRANSFERASES"/>
    <property type="match status" value="1"/>
</dbReference>
<feature type="chain" id="PRO_0000376686" description="2,3,4,5-tetrahydropyridine-2,6-dicarboxylate N-acetyltransferase">
    <location>
        <begin position="1"/>
        <end position="239"/>
    </location>
</feature>
<keyword id="KW-0012">Acyltransferase</keyword>
<keyword id="KW-0028">Amino-acid biosynthesis</keyword>
<keyword id="KW-0220">Diaminopimelate biosynthesis</keyword>
<keyword id="KW-0457">Lysine biosynthesis</keyword>
<keyword id="KW-0677">Repeat</keyword>
<keyword id="KW-0808">Transferase</keyword>
<organism>
    <name type="scientific">Staphylococcus aureus</name>
    <dbReference type="NCBI Taxonomy" id="1280"/>
    <lineage>
        <taxon>Bacteria</taxon>
        <taxon>Bacillati</taxon>
        <taxon>Bacillota</taxon>
        <taxon>Bacilli</taxon>
        <taxon>Bacillales</taxon>
        <taxon>Staphylococcaceae</taxon>
        <taxon>Staphylococcus</taxon>
    </lineage>
</organism>
<comment type="function">
    <text evidence="1">Catalyzes the transfer of an acetyl group from acetyl-CoA to tetrahydrodipicolinate.</text>
</comment>
<comment type="catalytic activity">
    <reaction evidence="1">
        <text>(S)-2,3,4,5-tetrahydrodipicolinate + acetyl-CoA + H2O = L-2-acetamido-6-oxoheptanedioate + CoA</text>
        <dbReference type="Rhea" id="RHEA:13085"/>
        <dbReference type="ChEBI" id="CHEBI:15377"/>
        <dbReference type="ChEBI" id="CHEBI:16845"/>
        <dbReference type="ChEBI" id="CHEBI:57287"/>
        <dbReference type="ChEBI" id="CHEBI:57288"/>
        <dbReference type="ChEBI" id="CHEBI:58117"/>
        <dbReference type="EC" id="2.3.1.89"/>
    </reaction>
</comment>
<comment type="pathway">
    <text evidence="1">Amino-acid biosynthesis; L-lysine biosynthesis via DAP pathway; LL-2,6-diaminopimelate from (S)-tetrahydrodipicolinate (acetylase route): step 1/3.</text>
</comment>
<comment type="similarity">
    <text evidence="1">Belongs to the transferase hexapeptide repeat family. DapH subfamily.</text>
</comment>
<sequence length="239" mass="25258">MVQHLTAEEIIQYISDAKKSTPIKVYLNGNFEGITYPESFKVFGSEQSKVIFCEADDWKPFYEAYGSQFEDIEIEMDRRNSAIPLKDLTNTNARIEPGAFIREQAIIEDGAVVMMGATINIGAVVGEGTMIDMNATLGGRATTGKNVHVGAGAVLAGVIEPPSASPVIIEDDVLIGANAVILEGVRVGKGAIVAAGAIVTQDVPAGAVVAGTPAKVIKQASEVQDTKKEIVAALRKLND</sequence>